<evidence type="ECO:0000255" key="1">
    <source>
        <dbReference type="HAMAP-Rule" id="MF_01077"/>
    </source>
</evidence>
<protein>
    <recommendedName>
        <fullName evidence="1">Ribosome maturation factor RimP</fullName>
    </recommendedName>
</protein>
<proteinExistence type="inferred from homology"/>
<gene>
    <name evidence="1" type="primary">rimP</name>
    <name type="ordered locus">PBPRA0610</name>
</gene>
<reference key="1">
    <citation type="journal article" date="2005" name="Science">
        <title>Life at depth: Photobacterium profundum genome sequence and expression analysis.</title>
        <authorList>
            <person name="Vezzi A."/>
            <person name="Campanaro S."/>
            <person name="D'Angelo M."/>
            <person name="Simonato F."/>
            <person name="Vitulo N."/>
            <person name="Lauro F.M."/>
            <person name="Cestaro A."/>
            <person name="Malacrida G."/>
            <person name="Simionati B."/>
            <person name="Cannata N."/>
            <person name="Romualdi C."/>
            <person name="Bartlett D.H."/>
            <person name="Valle G."/>
        </authorList>
    </citation>
    <scope>NUCLEOTIDE SEQUENCE [LARGE SCALE GENOMIC DNA]</scope>
    <source>
        <strain>ATCC BAA-1253 / SS9</strain>
    </source>
</reference>
<sequence length="151" mass="16757">MTALEMQLTELLEASVNASGYELVGLEFIRAGEHSTLRVFVDHENGINVEDCAEASRQISAVMDVEDPITVAYHLEVSSPGLERPLFKAAHYQQFVGHEVNLVLKMAMNNRRKWKGDIVAVEGELITLKVDGNDETFALSNISKANLIPKF</sequence>
<accession>Q6LUJ4</accession>
<organism>
    <name type="scientific">Photobacterium profundum (strain SS9)</name>
    <dbReference type="NCBI Taxonomy" id="298386"/>
    <lineage>
        <taxon>Bacteria</taxon>
        <taxon>Pseudomonadati</taxon>
        <taxon>Pseudomonadota</taxon>
        <taxon>Gammaproteobacteria</taxon>
        <taxon>Vibrionales</taxon>
        <taxon>Vibrionaceae</taxon>
        <taxon>Photobacterium</taxon>
    </lineage>
</organism>
<feature type="chain" id="PRO_0000181900" description="Ribosome maturation factor RimP">
    <location>
        <begin position="1"/>
        <end position="151"/>
    </location>
</feature>
<dbReference type="EMBL" id="CR378664">
    <property type="protein sequence ID" value="CAG19031.1"/>
    <property type="molecule type" value="Genomic_DNA"/>
</dbReference>
<dbReference type="RefSeq" id="WP_006230689.1">
    <property type="nucleotide sequence ID" value="NC_006370.1"/>
</dbReference>
<dbReference type="SMR" id="Q6LUJ4"/>
<dbReference type="STRING" id="298386.PBPRA0610"/>
<dbReference type="KEGG" id="ppr:PBPRA0610"/>
<dbReference type="eggNOG" id="COG0779">
    <property type="taxonomic scope" value="Bacteria"/>
</dbReference>
<dbReference type="HOGENOM" id="CLU_070525_1_1_6"/>
<dbReference type="Proteomes" id="UP000000593">
    <property type="component" value="Chromosome 1"/>
</dbReference>
<dbReference type="GO" id="GO:0005829">
    <property type="term" value="C:cytosol"/>
    <property type="evidence" value="ECO:0007669"/>
    <property type="project" value="TreeGrafter"/>
</dbReference>
<dbReference type="GO" id="GO:0000028">
    <property type="term" value="P:ribosomal small subunit assembly"/>
    <property type="evidence" value="ECO:0007669"/>
    <property type="project" value="TreeGrafter"/>
</dbReference>
<dbReference type="GO" id="GO:0006412">
    <property type="term" value="P:translation"/>
    <property type="evidence" value="ECO:0007669"/>
    <property type="project" value="TreeGrafter"/>
</dbReference>
<dbReference type="CDD" id="cd01734">
    <property type="entry name" value="YlxS_C"/>
    <property type="match status" value="1"/>
</dbReference>
<dbReference type="FunFam" id="2.30.30.180:FF:000001">
    <property type="entry name" value="Ribosome maturation factor RimP"/>
    <property type="match status" value="1"/>
</dbReference>
<dbReference type="FunFam" id="3.30.300.70:FF:000001">
    <property type="entry name" value="Ribosome maturation factor RimP"/>
    <property type="match status" value="1"/>
</dbReference>
<dbReference type="Gene3D" id="2.30.30.180">
    <property type="entry name" value="Ribosome maturation factor RimP, C-terminal domain"/>
    <property type="match status" value="1"/>
</dbReference>
<dbReference type="Gene3D" id="3.30.300.70">
    <property type="entry name" value="RimP-like superfamily, N-terminal"/>
    <property type="match status" value="1"/>
</dbReference>
<dbReference type="HAMAP" id="MF_01077">
    <property type="entry name" value="RimP"/>
    <property type="match status" value="1"/>
</dbReference>
<dbReference type="InterPro" id="IPR003728">
    <property type="entry name" value="Ribosome_maturation_RimP"/>
</dbReference>
<dbReference type="InterPro" id="IPR028998">
    <property type="entry name" value="RimP_C"/>
</dbReference>
<dbReference type="InterPro" id="IPR036847">
    <property type="entry name" value="RimP_C_sf"/>
</dbReference>
<dbReference type="InterPro" id="IPR028989">
    <property type="entry name" value="RimP_N"/>
</dbReference>
<dbReference type="InterPro" id="IPR035956">
    <property type="entry name" value="RimP_N_sf"/>
</dbReference>
<dbReference type="NCBIfam" id="NF000927">
    <property type="entry name" value="PRK00092.1-1"/>
    <property type="match status" value="1"/>
</dbReference>
<dbReference type="PANTHER" id="PTHR33867">
    <property type="entry name" value="RIBOSOME MATURATION FACTOR RIMP"/>
    <property type="match status" value="1"/>
</dbReference>
<dbReference type="PANTHER" id="PTHR33867:SF1">
    <property type="entry name" value="RIBOSOME MATURATION FACTOR RIMP"/>
    <property type="match status" value="1"/>
</dbReference>
<dbReference type="Pfam" id="PF17384">
    <property type="entry name" value="DUF150_C"/>
    <property type="match status" value="1"/>
</dbReference>
<dbReference type="Pfam" id="PF02576">
    <property type="entry name" value="RimP_N"/>
    <property type="match status" value="1"/>
</dbReference>
<dbReference type="SUPFAM" id="SSF74942">
    <property type="entry name" value="YhbC-like, C-terminal domain"/>
    <property type="match status" value="1"/>
</dbReference>
<dbReference type="SUPFAM" id="SSF75420">
    <property type="entry name" value="YhbC-like, N-terminal domain"/>
    <property type="match status" value="1"/>
</dbReference>
<keyword id="KW-0963">Cytoplasm</keyword>
<keyword id="KW-1185">Reference proteome</keyword>
<keyword id="KW-0690">Ribosome biogenesis</keyword>
<name>RIMP_PHOPR</name>
<comment type="function">
    <text evidence="1">Required for maturation of 30S ribosomal subunits.</text>
</comment>
<comment type="subcellular location">
    <subcellularLocation>
        <location evidence="1">Cytoplasm</location>
    </subcellularLocation>
</comment>
<comment type="similarity">
    <text evidence="1">Belongs to the RimP family.</text>
</comment>